<reference key="1">
    <citation type="journal article" date="2006" name="J. Bacteriol.">
        <title>Pathogenomic sequence analysis of Bacillus cereus and Bacillus thuringiensis isolates closely related to Bacillus anthracis.</title>
        <authorList>
            <person name="Han C.S."/>
            <person name="Xie G."/>
            <person name="Challacombe J.F."/>
            <person name="Altherr M.R."/>
            <person name="Bhotika S.S."/>
            <person name="Bruce D."/>
            <person name="Campbell C.S."/>
            <person name="Campbell M.L."/>
            <person name="Chen J."/>
            <person name="Chertkov O."/>
            <person name="Cleland C."/>
            <person name="Dimitrijevic M."/>
            <person name="Doggett N.A."/>
            <person name="Fawcett J.J."/>
            <person name="Glavina T."/>
            <person name="Goodwin L.A."/>
            <person name="Hill K.K."/>
            <person name="Hitchcock P."/>
            <person name="Jackson P.J."/>
            <person name="Keim P."/>
            <person name="Kewalramani A.R."/>
            <person name="Longmire J."/>
            <person name="Lucas S."/>
            <person name="Malfatti S."/>
            <person name="McMurry K."/>
            <person name="Meincke L.J."/>
            <person name="Misra M."/>
            <person name="Moseman B.L."/>
            <person name="Mundt M."/>
            <person name="Munk A.C."/>
            <person name="Okinaka R.T."/>
            <person name="Parson-Quintana B."/>
            <person name="Reilly L.P."/>
            <person name="Richardson P."/>
            <person name="Robinson D.L."/>
            <person name="Rubin E."/>
            <person name="Saunders E."/>
            <person name="Tapia R."/>
            <person name="Tesmer J.G."/>
            <person name="Thayer N."/>
            <person name="Thompson L.S."/>
            <person name="Tice H."/>
            <person name="Ticknor L.O."/>
            <person name="Wills P.L."/>
            <person name="Brettin T.S."/>
            <person name="Gilna P."/>
        </authorList>
    </citation>
    <scope>NUCLEOTIDE SEQUENCE [LARGE SCALE GENOMIC DNA]</scope>
    <source>
        <strain>ZK / E33L</strain>
    </source>
</reference>
<feature type="chain" id="PRO_0000176227" description="Elongation factor 4">
    <location>
        <begin position="1"/>
        <end position="607"/>
    </location>
</feature>
<feature type="domain" description="tr-type G">
    <location>
        <begin position="11"/>
        <end position="193"/>
    </location>
</feature>
<feature type="binding site" evidence="1">
    <location>
        <begin position="23"/>
        <end position="28"/>
    </location>
    <ligand>
        <name>GTP</name>
        <dbReference type="ChEBI" id="CHEBI:37565"/>
    </ligand>
</feature>
<feature type="binding site" evidence="1">
    <location>
        <begin position="140"/>
        <end position="143"/>
    </location>
    <ligand>
        <name>GTP</name>
        <dbReference type="ChEBI" id="CHEBI:37565"/>
    </ligand>
</feature>
<keyword id="KW-1003">Cell membrane</keyword>
<keyword id="KW-0342">GTP-binding</keyword>
<keyword id="KW-0378">Hydrolase</keyword>
<keyword id="KW-0472">Membrane</keyword>
<keyword id="KW-0547">Nucleotide-binding</keyword>
<keyword id="KW-0648">Protein biosynthesis</keyword>
<protein>
    <recommendedName>
        <fullName evidence="1">Elongation factor 4</fullName>
        <shortName evidence="1">EF-4</shortName>
        <ecNumber evidence="1">3.6.5.n1</ecNumber>
    </recommendedName>
    <alternativeName>
        <fullName evidence="1">Ribosomal back-translocase LepA</fullName>
    </alternativeName>
</protein>
<organism>
    <name type="scientific">Bacillus cereus (strain ZK / E33L)</name>
    <dbReference type="NCBI Taxonomy" id="288681"/>
    <lineage>
        <taxon>Bacteria</taxon>
        <taxon>Bacillati</taxon>
        <taxon>Bacillota</taxon>
        <taxon>Bacilli</taxon>
        <taxon>Bacillales</taxon>
        <taxon>Bacillaceae</taxon>
        <taxon>Bacillus</taxon>
        <taxon>Bacillus cereus group</taxon>
    </lineage>
</organism>
<dbReference type="EC" id="3.6.5.n1" evidence="1"/>
<dbReference type="EMBL" id="CP000001">
    <property type="protein sequence ID" value="AAU16203.1"/>
    <property type="molecule type" value="Genomic_DNA"/>
</dbReference>
<dbReference type="RefSeq" id="WP_001030952.1">
    <property type="nucleotide sequence ID" value="NZ_CP009968.1"/>
</dbReference>
<dbReference type="SMR" id="Q634M2"/>
<dbReference type="KEGG" id="bcz:BCE33L4066"/>
<dbReference type="PATRIC" id="fig|288681.22.peg.1324"/>
<dbReference type="Proteomes" id="UP000002612">
    <property type="component" value="Chromosome"/>
</dbReference>
<dbReference type="GO" id="GO:0005886">
    <property type="term" value="C:plasma membrane"/>
    <property type="evidence" value="ECO:0007669"/>
    <property type="project" value="UniProtKB-SubCell"/>
</dbReference>
<dbReference type="GO" id="GO:0005525">
    <property type="term" value="F:GTP binding"/>
    <property type="evidence" value="ECO:0007669"/>
    <property type="project" value="UniProtKB-UniRule"/>
</dbReference>
<dbReference type="GO" id="GO:0003924">
    <property type="term" value="F:GTPase activity"/>
    <property type="evidence" value="ECO:0007669"/>
    <property type="project" value="UniProtKB-UniRule"/>
</dbReference>
<dbReference type="GO" id="GO:0043022">
    <property type="term" value="F:ribosome binding"/>
    <property type="evidence" value="ECO:0007669"/>
    <property type="project" value="UniProtKB-UniRule"/>
</dbReference>
<dbReference type="GO" id="GO:0003746">
    <property type="term" value="F:translation elongation factor activity"/>
    <property type="evidence" value="ECO:0007669"/>
    <property type="project" value="UniProtKB-UniRule"/>
</dbReference>
<dbReference type="GO" id="GO:0045727">
    <property type="term" value="P:positive regulation of translation"/>
    <property type="evidence" value="ECO:0007669"/>
    <property type="project" value="UniProtKB-UniRule"/>
</dbReference>
<dbReference type="CDD" id="cd03699">
    <property type="entry name" value="EF4_II"/>
    <property type="match status" value="1"/>
</dbReference>
<dbReference type="CDD" id="cd16260">
    <property type="entry name" value="EF4_III"/>
    <property type="match status" value="1"/>
</dbReference>
<dbReference type="CDD" id="cd01890">
    <property type="entry name" value="LepA"/>
    <property type="match status" value="1"/>
</dbReference>
<dbReference type="CDD" id="cd03709">
    <property type="entry name" value="lepA_C"/>
    <property type="match status" value="1"/>
</dbReference>
<dbReference type="FunFam" id="3.40.50.300:FF:000078">
    <property type="entry name" value="Elongation factor 4"/>
    <property type="match status" value="1"/>
</dbReference>
<dbReference type="FunFam" id="2.40.30.10:FF:000015">
    <property type="entry name" value="Translation factor GUF1, mitochondrial"/>
    <property type="match status" value="1"/>
</dbReference>
<dbReference type="FunFam" id="3.30.70.240:FF:000007">
    <property type="entry name" value="Translation factor GUF1, mitochondrial"/>
    <property type="match status" value="1"/>
</dbReference>
<dbReference type="FunFam" id="3.30.70.2570:FF:000001">
    <property type="entry name" value="Translation factor GUF1, mitochondrial"/>
    <property type="match status" value="1"/>
</dbReference>
<dbReference type="FunFam" id="3.30.70.870:FF:000004">
    <property type="entry name" value="Translation factor GUF1, mitochondrial"/>
    <property type="match status" value="1"/>
</dbReference>
<dbReference type="Gene3D" id="3.30.70.240">
    <property type="match status" value="1"/>
</dbReference>
<dbReference type="Gene3D" id="3.30.70.2570">
    <property type="entry name" value="Elongation factor 4, C-terminal domain"/>
    <property type="match status" value="1"/>
</dbReference>
<dbReference type="Gene3D" id="3.30.70.870">
    <property type="entry name" value="Elongation Factor G (Translational Gtpase), domain 3"/>
    <property type="match status" value="1"/>
</dbReference>
<dbReference type="Gene3D" id="3.40.50.300">
    <property type="entry name" value="P-loop containing nucleotide triphosphate hydrolases"/>
    <property type="match status" value="1"/>
</dbReference>
<dbReference type="Gene3D" id="2.40.30.10">
    <property type="entry name" value="Translation factors"/>
    <property type="match status" value="1"/>
</dbReference>
<dbReference type="HAMAP" id="MF_00071">
    <property type="entry name" value="LepA"/>
    <property type="match status" value="1"/>
</dbReference>
<dbReference type="InterPro" id="IPR006297">
    <property type="entry name" value="EF-4"/>
</dbReference>
<dbReference type="InterPro" id="IPR035647">
    <property type="entry name" value="EFG_III/V"/>
</dbReference>
<dbReference type="InterPro" id="IPR000640">
    <property type="entry name" value="EFG_V-like"/>
</dbReference>
<dbReference type="InterPro" id="IPR004161">
    <property type="entry name" value="EFTu-like_2"/>
</dbReference>
<dbReference type="InterPro" id="IPR031157">
    <property type="entry name" value="G_TR_CS"/>
</dbReference>
<dbReference type="InterPro" id="IPR038363">
    <property type="entry name" value="LepA_C_sf"/>
</dbReference>
<dbReference type="InterPro" id="IPR013842">
    <property type="entry name" value="LepA_CTD"/>
</dbReference>
<dbReference type="InterPro" id="IPR035654">
    <property type="entry name" value="LepA_IV"/>
</dbReference>
<dbReference type="InterPro" id="IPR027417">
    <property type="entry name" value="P-loop_NTPase"/>
</dbReference>
<dbReference type="InterPro" id="IPR005225">
    <property type="entry name" value="Small_GTP-bd"/>
</dbReference>
<dbReference type="InterPro" id="IPR000795">
    <property type="entry name" value="T_Tr_GTP-bd_dom"/>
</dbReference>
<dbReference type="NCBIfam" id="TIGR01393">
    <property type="entry name" value="lepA"/>
    <property type="match status" value="1"/>
</dbReference>
<dbReference type="NCBIfam" id="TIGR00231">
    <property type="entry name" value="small_GTP"/>
    <property type="match status" value="1"/>
</dbReference>
<dbReference type="PANTHER" id="PTHR43512:SF4">
    <property type="entry name" value="TRANSLATION FACTOR GUF1 HOMOLOG, CHLOROPLASTIC"/>
    <property type="match status" value="1"/>
</dbReference>
<dbReference type="PANTHER" id="PTHR43512">
    <property type="entry name" value="TRANSLATION FACTOR GUF1-RELATED"/>
    <property type="match status" value="1"/>
</dbReference>
<dbReference type="Pfam" id="PF00679">
    <property type="entry name" value="EFG_C"/>
    <property type="match status" value="1"/>
</dbReference>
<dbReference type="Pfam" id="PF00009">
    <property type="entry name" value="GTP_EFTU"/>
    <property type="match status" value="1"/>
</dbReference>
<dbReference type="Pfam" id="PF03144">
    <property type="entry name" value="GTP_EFTU_D2"/>
    <property type="match status" value="1"/>
</dbReference>
<dbReference type="Pfam" id="PF06421">
    <property type="entry name" value="LepA_C"/>
    <property type="match status" value="1"/>
</dbReference>
<dbReference type="PRINTS" id="PR00315">
    <property type="entry name" value="ELONGATNFCT"/>
</dbReference>
<dbReference type="SMART" id="SM00838">
    <property type="entry name" value="EFG_C"/>
    <property type="match status" value="1"/>
</dbReference>
<dbReference type="SUPFAM" id="SSF54980">
    <property type="entry name" value="EF-G C-terminal domain-like"/>
    <property type="match status" value="2"/>
</dbReference>
<dbReference type="SUPFAM" id="SSF52540">
    <property type="entry name" value="P-loop containing nucleoside triphosphate hydrolases"/>
    <property type="match status" value="1"/>
</dbReference>
<dbReference type="PROSITE" id="PS00301">
    <property type="entry name" value="G_TR_1"/>
    <property type="match status" value="1"/>
</dbReference>
<dbReference type="PROSITE" id="PS51722">
    <property type="entry name" value="G_TR_2"/>
    <property type="match status" value="1"/>
</dbReference>
<sequence>MNKEERAKRQSKIRNFSIIAHIDHGKSTLADRILEKTNALTQREMKAQLLDSMDLERERGITIKLNAVQLNYKAKDGEEYILHLIDTPGHVDFTYEVSRSLAACEGAILVVDAAQGIEAQTLANVYLALDNNLEILPVINKIDLPSADPERVRQEVEDVIGLDASEAVLASAKAGIGIEEILEQIVEKVPAPTGDSEEPLQCMIFDSLYDPYRGVIAYIRVVNGTVKVGDKVRMMATGKEFEVTEVGVFTPKTTQRDELTVGDVGFLAASIKNVGDTRVGDTITHAKRPAAEPLAGYRKLNPMVFCGLYPIDSARYNDLRDALEKLELNDSALEFEPETSQALGFGFRCGFLGLLHMEIIQERIEREFKIDLITTAPSVIYKVFLTNGEDMIVDNPSNMPDPQIIDRVEEPFVKAAIMVPNDYVGAVMEICQGKRGTFIDMQYLDETRVTLTYEIPLSEIVYDFFDQLKSNTKGYASFDYELIGYKPSKLVKMDILLNSEQVDALSFIVHRDSAYDRGKVIVEKLKELIPRQQFEVPIQATIGNKVVARSTIKAMRKNVLAKCYGGDISRKRKLLDKQKEGKKRMKSVGSVEVPQEAFMAVLKMDDN</sequence>
<gene>
    <name evidence="1" type="primary">lepA</name>
    <name type="ordered locus">BCE33L4066</name>
</gene>
<evidence type="ECO:0000255" key="1">
    <source>
        <dbReference type="HAMAP-Rule" id="MF_00071"/>
    </source>
</evidence>
<comment type="function">
    <text evidence="1">Required for accurate and efficient protein synthesis under certain stress conditions. May act as a fidelity factor of the translation reaction, by catalyzing a one-codon backward translocation of tRNAs on improperly translocated ribosomes. Back-translocation proceeds from a post-translocation (POST) complex to a pre-translocation (PRE) complex, thus giving elongation factor G a second chance to translocate the tRNAs correctly. Binds to ribosomes in a GTP-dependent manner.</text>
</comment>
<comment type="catalytic activity">
    <reaction evidence="1">
        <text>GTP + H2O = GDP + phosphate + H(+)</text>
        <dbReference type="Rhea" id="RHEA:19669"/>
        <dbReference type="ChEBI" id="CHEBI:15377"/>
        <dbReference type="ChEBI" id="CHEBI:15378"/>
        <dbReference type="ChEBI" id="CHEBI:37565"/>
        <dbReference type="ChEBI" id="CHEBI:43474"/>
        <dbReference type="ChEBI" id="CHEBI:58189"/>
        <dbReference type="EC" id="3.6.5.n1"/>
    </reaction>
</comment>
<comment type="subcellular location">
    <subcellularLocation>
        <location evidence="1">Cell membrane</location>
        <topology evidence="1">Peripheral membrane protein</topology>
        <orientation evidence="1">Cytoplasmic side</orientation>
    </subcellularLocation>
</comment>
<comment type="similarity">
    <text evidence="1">Belongs to the TRAFAC class translation factor GTPase superfamily. Classic translation factor GTPase family. LepA subfamily.</text>
</comment>
<proteinExistence type="inferred from homology"/>
<name>LEPA_BACCZ</name>
<accession>Q634M2</accession>